<evidence type="ECO:0000255" key="1">
    <source>
        <dbReference type="HAMAP-Rule" id="MF_01394"/>
    </source>
</evidence>
<gene>
    <name evidence="1" type="primary">nuoA</name>
    <name type="ordered locus">Bfl493</name>
</gene>
<keyword id="KW-0997">Cell inner membrane</keyword>
<keyword id="KW-1003">Cell membrane</keyword>
<keyword id="KW-0472">Membrane</keyword>
<keyword id="KW-0520">NAD</keyword>
<keyword id="KW-0874">Quinone</keyword>
<keyword id="KW-1185">Reference proteome</keyword>
<keyword id="KW-1278">Translocase</keyword>
<keyword id="KW-0812">Transmembrane</keyword>
<keyword id="KW-1133">Transmembrane helix</keyword>
<keyword id="KW-0813">Transport</keyword>
<keyword id="KW-0830">Ubiquinone</keyword>
<reference key="1">
    <citation type="journal article" date="2003" name="Proc. Natl. Acad. Sci. U.S.A.">
        <title>The genome sequence of Blochmannia floridanus: comparative analysis of reduced genomes.</title>
        <authorList>
            <person name="Gil R."/>
            <person name="Silva F.J."/>
            <person name="Zientz E."/>
            <person name="Delmotte F."/>
            <person name="Gonzalez-Candelas F."/>
            <person name="Latorre A."/>
            <person name="Rausell C."/>
            <person name="Kamerbeek J."/>
            <person name="Gadau J."/>
            <person name="Hoelldobler B."/>
            <person name="van Ham R.C.H.J."/>
            <person name="Gross R."/>
            <person name="Moya A."/>
        </authorList>
    </citation>
    <scope>NUCLEOTIDE SEQUENCE [LARGE SCALE GENOMIC DNA]</scope>
</reference>
<dbReference type="EC" id="7.1.1.-" evidence="1"/>
<dbReference type="EMBL" id="BX248583">
    <property type="protein sequence ID" value="CAD83182.1"/>
    <property type="molecule type" value="Genomic_DNA"/>
</dbReference>
<dbReference type="SMR" id="Q7VRV2"/>
<dbReference type="STRING" id="203907.Bfl493"/>
<dbReference type="KEGG" id="bfl:Bfl493"/>
<dbReference type="eggNOG" id="COG0838">
    <property type="taxonomic scope" value="Bacteria"/>
</dbReference>
<dbReference type="HOGENOM" id="CLU_119549_2_0_6"/>
<dbReference type="OrthoDB" id="9791970at2"/>
<dbReference type="Proteomes" id="UP000002192">
    <property type="component" value="Chromosome"/>
</dbReference>
<dbReference type="GO" id="GO:0030964">
    <property type="term" value="C:NADH dehydrogenase complex"/>
    <property type="evidence" value="ECO:0007669"/>
    <property type="project" value="TreeGrafter"/>
</dbReference>
<dbReference type="GO" id="GO:0005886">
    <property type="term" value="C:plasma membrane"/>
    <property type="evidence" value="ECO:0007669"/>
    <property type="project" value="UniProtKB-SubCell"/>
</dbReference>
<dbReference type="GO" id="GO:0008137">
    <property type="term" value="F:NADH dehydrogenase (ubiquinone) activity"/>
    <property type="evidence" value="ECO:0007669"/>
    <property type="project" value="InterPro"/>
</dbReference>
<dbReference type="GO" id="GO:0050136">
    <property type="term" value="F:NADH:ubiquinone reductase (non-electrogenic) activity"/>
    <property type="evidence" value="ECO:0007669"/>
    <property type="project" value="UniProtKB-UniRule"/>
</dbReference>
<dbReference type="GO" id="GO:0048038">
    <property type="term" value="F:quinone binding"/>
    <property type="evidence" value="ECO:0007669"/>
    <property type="project" value="UniProtKB-KW"/>
</dbReference>
<dbReference type="Gene3D" id="1.20.58.1610">
    <property type="entry name" value="NADH:ubiquinone/plastoquinone oxidoreductase, chain 3"/>
    <property type="match status" value="1"/>
</dbReference>
<dbReference type="HAMAP" id="MF_01394">
    <property type="entry name" value="NDH1_NuoA"/>
    <property type="match status" value="1"/>
</dbReference>
<dbReference type="InterPro" id="IPR023043">
    <property type="entry name" value="NAD(P)H_OxRDtase_bac/plastid"/>
</dbReference>
<dbReference type="InterPro" id="IPR000440">
    <property type="entry name" value="NADH_UbQ/plastoQ_OxRdtase_su3"/>
</dbReference>
<dbReference type="InterPro" id="IPR038430">
    <property type="entry name" value="NDAH_ubi_oxred_su3_sf"/>
</dbReference>
<dbReference type="PANTHER" id="PTHR11058:SF21">
    <property type="entry name" value="NADH-QUINONE OXIDOREDUCTASE SUBUNIT A"/>
    <property type="match status" value="1"/>
</dbReference>
<dbReference type="PANTHER" id="PTHR11058">
    <property type="entry name" value="NADH-UBIQUINONE OXIDOREDUCTASE CHAIN 3"/>
    <property type="match status" value="1"/>
</dbReference>
<dbReference type="Pfam" id="PF00507">
    <property type="entry name" value="Oxidored_q4"/>
    <property type="match status" value="1"/>
</dbReference>
<proteinExistence type="inferred from homology"/>
<name>NUOA_BLOFL</name>
<sequence length="143" mass="16550">MQETECCGVLSYIVGSVFLCVFMLLCGYFLGGRSYSRFKNVPFESGIKSVGDARARFSVKFYLIAMIFVIFDVEGIYLYIWSVSIQETGWIGFIEVCIFVFILLISLIYATYVGVFNWKNRLNEYSRVDSLYIGRSKFFKNDK</sequence>
<organism>
    <name type="scientific">Blochmanniella floridana</name>
    <dbReference type="NCBI Taxonomy" id="203907"/>
    <lineage>
        <taxon>Bacteria</taxon>
        <taxon>Pseudomonadati</taxon>
        <taxon>Pseudomonadota</taxon>
        <taxon>Gammaproteobacteria</taxon>
        <taxon>Enterobacterales</taxon>
        <taxon>Enterobacteriaceae</taxon>
        <taxon>ant endosymbionts</taxon>
        <taxon>Candidatus Blochmanniella</taxon>
    </lineage>
</organism>
<comment type="function">
    <text evidence="1">NDH-1 shuttles electrons from NADH, via FMN and iron-sulfur (Fe-S) centers, to quinones in the respiratory chain. The immediate electron acceptor for the enzyme in this species is believed to be ubiquinone. Couples the redox reaction to proton translocation (for every two electrons transferred, four hydrogen ions are translocated across the cytoplasmic membrane), and thus conserves the redox energy in a proton gradient.</text>
</comment>
<comment type="catalytic activity">
    <reaction evidence="1">
        <text>a quinone + NADH + 5 H(+)(in) = a quinol + NAD(+) + 4 H(+)(out)</text>
        <dbReference type="Rhea" id="RHEA:57888"/>
        <dbReference type="ChEBI" id="CHEBI:15378"/>
        <dbReference type="ChEBI" id="CHEBI:24646"/>
        <dbReference type="ChEBI" id="CHEBI:57540"/>
        <dbReference type="ChEBI" id="CHEBI:57945"/>
        <dbReference type="ChEBI" id="CHEBI:132124"/>
    </reaction>
</comment>
<comment type="subunit">
    <text evidence="1">NDH-1 is composed of 13 different subunits. Subunits NuoA, H, J, K, L, M, N constitute the membrane sector of the complex.</text>
</comment>
<comment type="subcellular location">
    <subcellularLocation>
        <location evidence="1">Cell inner membrane</location>
        <topology evidence="1">Multi-pass membrane protein</topology>
    </subcellularLocation>
</comment>
<comment type="similarity">
    <text evidence="1">Belongs to the complex I subunit 3 family.</text>
</comment>
<feature type="chain" id="PRO_0000362631" description="NADH-quinone oxidoreductase subunit A">
    <location>
        <begin position="1"/>
        <end position="143"/>
    </location>
</feature>
<feature type="transmembrane region" description="Helical" evidence="1">
    <location>
        <begin position="12"/>
        <end position="32"/>
    </location>
</feature>
<feature type="transmembrane region" description="Helical" evidence="1">
    <location>
        <begin position="61"/>
        <end position="81"/>
    </location>
</feature>
<feature type="transmembrane region" description="Helical" evidence="1">
    <location>
        <begin position="90"/>
        <end position="110"/>
    </location>
</feature>
<protein>
    <recommendedName>
        <fullName evidence="1">NADH-quinone oxidoreductase subunit A</fullName>
        <ecNumber evidence="1">7.1.1.-</ecNumber>
    </recommendedName>
    <alternativeName>
        <fullName evidence="1">NADH dehydrogenase I subunit A</fullName>
    </alternativeName>
    <alternativeName>
        <fullName evidence="1">NDH-1 subunit A</fullName>
    </alternativeName>
    <alternativeName>
        <fullName evidence="1">NUO1</fullName>
    </alternativeName>
</protein>
<accession>Q7VRV2</accession>